<evidence type="ECO:0000250" key="1"/>
<evidence type="ECO:0000305" key="2"/>
<proteinExistence type="inferred from homology"/>
<keyword id="KW-0030">Aminoacyl-tRNA synthetase</keyword>
<keyword id="KW-0067">ATP-binding</keyword>
<keyword id="KW-0963">Cytoplasm</keyword>
<keyword id="KW-0436">Ligase</keyword>
<keyword id="KW-0547">Nucleotide-binding</keyword>
<keyword id="KW-0648">Protein biosynthesis</keyword>
<keyword id="KW-1185">Reference proteome</keyword>
<protein>
    <recommendedName>
        <fullName>Histidine--tRNA ligase</fullName>
        <ecNumber>6.1.1.21</ecNumber>
    </recommendedName>
    <alternativeName>
        <fullName>Histidyl-tRNA synthetase</fullName>
        <shortName>HisRS</shortName>
    </alternativeName>
</protein>
<feature type="chain" id="PRO_0000136240" description="Histidine--tRNA ligase">
    <location>
        <begin position="1"/>
        <end position="413"/>
    </location>
</feature>
<accession>Q9ZDL9</accession>
<organism>
    <name type="scientific">Rickettsia prowazekii (strain Madrid E)</name>
    <dbReference type="NCBI Taxonomy" id="272947"/>
    <lineage>
        <taxon>Bacteria</taxon>
        <taxon>Pseudomonadati</taxon>
        <taxon>Pseudomonadota</taxon>
        <taxon>Alphaproteobacteria</taxon>
        <taxon>Rickettsiales</taxon>
        <taxon>Rickettsiaceae</taxon>
        <taxon>Rickettsieae</taxon>
        <taxon>Rickettsia</taxon>
        <taxon>typhus group</taxon>
    </lineage>
</organism>
<comment type="catalytic activity">
    <reaction>
        <text>tRNA(His) + L-histidine + ATP = L-histidyl-tRNA(His) + AMP + diphosphate + H(+)</text>
        <dbReference type="Rhea" id="RHEA:17313"/>
        <dbReference type="Rhea" id="RHEA-COMP:9665"/>
        <dbReference type="Rhea" id="RHEA-COMP:9689"/>
        <dbReference type="ChEBI" id="CHEBI:15378"/>
        <dbReference type="ChEBI" id="CHEBI:30616"/>
        <dbReference type="ChEBI" id="CHEBI:33019"/>
        <dbReference type="ChEBI" id="CHEBI:57595"/>
        <dbReference type="ChEBI" id="CHEBI:78442"/>
        <dbReference type="ChEBI" id="CHEBI:78527"/>
        <dbReference type="ChEBI" id="CHEBI:456215"/>
        <dbReference type="EC" id="6.1.1.21"/>
    </reaction>
</comment>
<comment type="subunit">
    <text evidence="1">Homodimer.</text>
</comment>
<comment type="subcellular location">
    <subcellularLocation>
        <location evidence="1">Cytoplasm</location>
    </subcellularLocation>
</comment>
<comment type="similarity">
    <text evidence="2">Belongs to the class-II aminoacyl-tRNA synthetase family.</text>
</comment>
<comment type="sequence caution" evidence="2">
    <conflict type="erroneous initiation">
        <sequence resource="EMBL-CDS" id="CAA14769"/>
    </conflict>
</comment>
<name>SYH_RICPR</name>
<sequence length="413" mass="47622">MIENLQPLRGMKDLLPNDYQIHNYIINKARDVGALYGYKQMSTPILEYTKVFNRSMGESSDVMSKEIYSFVDKSNNAVALRPEFTSGIIRSFISNGLQHKLPLKFFSTGPVFRYDRPQAGRQRQFHQLNYEYLGAKGAITDAETVKLAVDILKALEIEEDTTLELNSLGCHESRIVYQQKLVEYLNDFKDQLSGESRLRLNKNPMRILDSKSEIDQKIIAHAPILSEYHTNESKKYFDELQKYLDILGIKYSVNPRLVRGLDYYCHTVFEFTTKKLGSQSTILAGGRYDMLSRIMGNYDVHAIGFAAGIERIALMREYKISVIKPVFVLPIGKNNICYALDIVDKLRLQNIVSIIDPIGKIAKRIQRVLNEDAKFIIFIGDEEKMNNNLKFKDLKNQKEYIIDFEKVLELLKQ</sequence>
<dbReference type="EC" id="6.1.1.21"/>
<dbReference type="EMBL" id="AJ235271">
    <property type="protein sequence ID" value="CAA14769.1"/>
    <property type="status" value="ALT_INIT"/>
    <property type="molecule type" value="Genomic_DNA"/>
</dbReference>
<dbReference type="PIR" id="G71686">
    <property type="entry name" value="G71686"/>
</dbReference>
<dbReference type="RefSeq" id="NP_220692.1">
    <property type="nucleotide sequence ID" value="NC_000963.1"/>
</dbReference>
<dbReference type="RefSeq" id="WP_004597402.1">
    <property type="nucleotide sequence ID" value="NC_000963.1"/>
</dbReference>
<dbReference type="SMR" id="Q9ZDL9"/>
<dbReference type="STRING" id="272947.gene:17555389"/>
<dbReference type="EnsemblBacteria" id="CAA14769">
    <property type="protein sequence ID" value="CAA14769"/>
    <property type="gene ID" value="CAA14769"/>
</dbReference>
<dbReference type="GeneID" id="57569435"/>
<dbReference type="KEGG" id="rpr:RP308"/>
<dbReference type="PATRIC" id="fig|272947.5.peg.317"/>
<dbReference type="eggNOG" id="COG0124">
    <property type="taxonomic scope" value="Bacteria"/>
</dbReference>
<dbReference type="HOGENOM" id="CLU_025113_1_0_5"/>
<dbReference type="OrthoDB" id="9800814at2"/>
<dbReference type="Proteomes" id="UP000002480">
    <property type="component" value="Chromosome"/>
</dbReference>
<dbReference type="GO" id="GO:0005737">
    <property type="term" value="C:cytoplasm"/>
    <property type="evidence" value="ECO:0007669"/>
    <property type="project" value="UniProtKB-SubCell"/>
</dbReference>
<dbReference type="GO" id="GO:0005524">
    <property type="term" value="F:ATP binding"/>
    <property type="evidence" value="ECO:0007669"/>
    <property type="project" value="UniProtKB-UniRule"/>
</dbReference>
<dbReference type="GO" id="GO:0004821">
    <property type="term" value="F:histidine-tRNA ligase activity"/>
    <property type="evidence" value="ECO:0007669"/>
    <property type="project" value="UniProtKB-UniRule"/>
</dbReference>
<dbReference type="GO" id="GO:0006427">
    <property type="term" value="P:histidyl-tRNA aminoacylation"/>
    <property type="evidence" value="ECO:0007669"/>
    <property type="project" value="UniProtKB-UniRule"/>
</dbReference>
<dbReference type="CDD" id="cd00773">
    <property type="entry name" value="HisRS-like_core"/>
    <property type="match status" value="1"/>
</dbReference>
<dbReference type="CDD" id="cd00859">
    <property type="entry name" value="HisRS_anticodon"/>
    <property type="match status" value="1"/>
</dbReference>
<dbReference type="Gene3D" id="3.40.50.800">
    <property type="entry name" value="Anticodon-binding domain"/>
    <property type="match status" value="1"/>
</dbReference>
<dbReference type="Gene3D" id="3.30.930.10">
    <property type="entry name" value="Bira Bifunctional Protein, Domain 2"/>
    <property type="match status" value="1"/>
</dbReference>
<dbReference type="HAMAP" id="MF_00127">
    <property type="entry name" value="His_tRNA_synth"/>
    <property type="match status" value="1"/>
</dbReference>
<dbReference type="InterPro" id="IPR006195">
    <property type="entry name" value="aa-tRNA-synth_II"/>
</dbReference>
<dbReference type="InterPro" id="IPR045864">
    <property type="entry name" value="aa-tRNA-synth_II/BPL/LPL"/>
</dbReference>
<dbReference type="InterPro" id="IPR004154">
    <property type="entry name" value="Anticodon-bd"/>
</dbReference>
<dbReference type="InterPro" id="IPR036621">
    <property type="entry name" value="Anticodon-bd_dom_sf"/>
</dbReference>
<dbReference type="InterPro" id="IPR015807">
    <property type="entry name" value="His-tRNA-ligase"/>
</dbReference>
<dbReference type="InterPro" id="IPR041715">
    <property type="entry name" value="HisRS-like_core"/>
</dbReference>
<dbReference type="InterPro" id="IPR004516">
    <property type="entry name" value="HisRS/HisZ"/>
</dbReference>
<dbReference type="InterPro" id="IPR033656">
    <property type="entry name" value="HisRS_anticodon"/>
</dbReference>
<dbReference type="NCBIfam" id="TIGR00442">
    <property type="entry name" value="hisS"/>
    <property type="match status" value="1"/>
</dbReference>
<dbReference type="PANTHER" id="PTHR43707:SF1">
    <property type="entry name" value="HISTIDINE--TRNA LIGASE, MITOCHONDRIAL-RELATED"/>
    <property type="match status" value="1"/>
</dbReference>
<dbReference type="PANTHER" id="PTHR43707">
    <property type="entry name" value="HISTIDYL-TRNA SYNTHETASE"/>
    <property type="match status" value="1"/>
</dbReference>
<dbReference type="Pfam" id="PF03129">
    <property type="entry name" value="HGTP_anticodon"/>
    <property type="match status" value="1"/>
</dbReference>
<dbReference type="Pfam" id="PF13393">
    <property type="entry name" value="tRNA-synt_His"/>
    <property type="match status" value="1"/>
</dbReference>
<dbReference type="PIRSF" id="PIRSF001549">
    <property type="entry name" value="His-tRNA_synth"/>
    <property type="match status" value="1"/>
</dbReference>
<dbReference type="SUPFAM" id="SSF52954">
    <property type="entry name" value="Class II aaRS ABD-related"/>
    <property type="match status" value="1"/>
</dbReference>
<dbReference type="SUPFAM" id="SSF55681">
    <property type="entry name" value="Class II aaRS and biotin synthetases"/>
    <property type="match status" value="1"/>
</dbReference>
<dbReference type="PROSITE" id="PS50862">
    <property type="entry name" value="AA_TRNA_LIGASE_II"/>
    <property type="match status" value="1"/>
</dbReference>
<gene>
    <name type="primary">hisS</name>
    <name type="ordered locus">RP308</name>
</gene>
<reference key="1">
    <citation type="journal article" date="1998" name="Nature">
        <title>The genome sequence of Rickettsia prowazekii and the origin of mitochondria.</title>
        <authorList>
            <person name="Andersson S.G.E."/>
            <person name="Zomorodipour A."/>
            <person name="Andersson J.O."/>
            <person name="Sicheritz-Ponten T."/>
            <person name="Alsmark U.C.M."/>
            <person name="Podowski R.M."/>
            <person name="Naeslund A.K."/>
            <person name="Eriksson A.-S."/>
            <person name="Winkler H.H."/>
            <person name="Kurland C.G."/>
        </authorList>
    </citation>
    <scope>NUCLEOTIDE SEQUENCE [LARGE SCALE GENOMIC DNA]</scope>
    <source>
        <strain>Madrid E</strain>
    </source>
</reference>